<comment type="function">
    <text evidence="2">Catalyzes the reversible isomerization of alpha-D-glucose 1-phosphate to alpha-D-glucose 6-phosphate (By similarity). The mechanism proceeds via the intermediate compound alpha-D-glucose 1,6-bisphosphate (By similarity). Key enzyme in hexose metabolism (By similarity). The reverse reaction is an essential step for biosynthesis because glucose 1-phosphate is the starting point for the synthesis of UDP-glucose, which acts as a precursor for the synthesis of oligosaccharides and trehalose (By similarity).</text>
</comment>
<comment type="catalytic activity">
    <reaction evidence="2">
        <text>alpha-D-glucose 1-phosphate = alpha-D-glucose 6-phosphate</text>
        <dbReference type="Rhea" id="RHEA:23536"/>
        <dbReference type="ChEBI" id="CHEBI:58225"/>
        <dbReference type="ChEBI" id="CHEBI:58601"/>
        <dbReference type="EC" id="5.4.2.2"/>
    </reaction>
</comment>
<comment type="catalytic activity">
    <reaction evidence="2">
        <text>O-phospho-L-seryl-[protein] + alpha-D-glucose 1-phosphate = alpha-D-glucose 1,6-bisphosphate + L-seryl-[protein]</text>
        <dbReference type="Rhea" id="RHEA:68748"/>
        <dbReference type="Rhea" id="RHEA-COMP:9863"/>
        <dbReference type="Rhea" id="RHEA-COMP:11604"/>
        <dbReference type="ChEBI" id="CHEBI:29999"/>
        <dbReference type="ChEBI" id="CHEBI:58392"/>
        <dbReference type="ChEBI" id="CHEBI:58601"/>
        <dbReference type="ChEBI" id="CHEBI:83421"/>
    </reaction>
</comment>
<comment type="catalytic activity">
    <reaction evidence="2">
        <text>alpha-D-glucose 1,6-bisphosphate + L-seryl-[protein] = O-phospho-L-seryl-[protein] + alpha-D-glucose 6-phosphate</text>
        <dbReference type="Rhea" id="RHEA:68752"/>
        <dbReference type="Rhea" id="RHEA-COMP:9863"/>
        <dbReference type="Rhea" id="RHEA-COMP:11604"/>
        <dbReference type="ChEBI" id="CHEBI:29999"/>
        <dbReference type="ChEBI" id="CHEBI:58225"/>
        <dbReference type="ChEBI" id="CHEBI:58392"/>
        <dbReference type="ChEBI" id="CHEBI:83421"/>
    </reaction>
</comment>
<comment type="cofactor">
    <cofactor evidence="1">
        <name>Mg(2+)</name>
        <dbReference type="ChEBI" id="CHEBI:18420"/>
    </cofactor>
    <text evidence="1">Binds 1 Mg(2+) ion per subunit.</text>
</comment>
<comment type="subunit">
    <text evidence="2">Monomer.</text>
</comment>
<comment type="subcellular location">
    <subcellularLocation>
        <location evidence="2">Cytoplasm</location>
    </subcellularLocation>
</comment>
<comment type="similarity">
    <text evidence="3">Belongs to the phosphohexose mutase family.</text>
</comment>
<sequence>MSVQTVSIQPFTDQKPGTSGLRKKVKVFQQPHYSEAFVTSILLSIPEGAEGAFLVIGGDGRYYNPEVIQKIAKISAAYGVKKLLIGQNGILSTPAASNLIRVRKATGGILLTASHNPGGPNADFGIKYNLCNGAPAPESVTNKIYETSKSLTSYKIAEIPDVDTSTIGTKTYGPLEVEIVHSTSDYLKMLKEIFDFDLIKEFLSTHKDFKVLFDGMHGVTGPYGVDIFVKELGLPQDSTMNCVPSPDFNGGHPDPNLVYAHELVEAVDKKGIHFGAASDGDGDRNMIYGANTFVSPGDSLAIIAHHAKLIPWFQKQGVYGLARSMPTSGAVDLVAKAQGLQSYEVPTGWKFFCNLFDNKKISICGEESFGTGSNHIREKDGVWAIVAWLNIIAGVAKQKPNETPSIASIQNEFWQTYGRTFFTRYDYENVDSDAANKLIANLSEKINNKDSFVGSTVSGRKVADAGNFAYTDLDGSVTKNQGLYVKFDDGSRLVVRLSGTGSSGATIRLYIEKYESDKSKFGMNTQDYLKDNVALAMSLLKFKEYIGREDPDVKT</sequence>
<protein>
    <recommendedName>
        <fullName evidence="2">Phosphoglucomutase</fullName>
        <shortName evidence="2">PGM</shortName>
        <ecNumber evidence="2">5.4.2.2</ecNumber>
    </recommendedName>
    <alternativeName>
        <fullName>Glucose phosphomutase</fullName>
    </alternativeName>
</protein>
<organism>
    <name type="scientific">Aspergillus fumigatus (strain ATCC MYA-4609 / CBS 101355 / FGSC A1100 / Af293)</name>
    <name type="common">Neosartorya fumigata</name>
    <dbReference type="NCBI Taxonomy" id="330879"/>
    <lineage>
        <taxon>Eukaryota</taxon>
        <taxon>Fungi</taxon>
        <taxon>Dikarya</taxon>
        <taxon>Ascomycota</taxon>
        <taxon>Pezizomycotina</taxon>
        <taxon>Eurotiomycetes</taxon>
        <taxon>Eurotiomycetidae</taxon>
        <taxon>Eurotiales</taxon>
        <taxon>Aspergillaceae</taxon>
        <taxon>Aspergillus</taxon>
        <taxon>Aspergillus subgen. Fumigati</taxon>
    </lineage>
</organism>
<gene>
    <name type="primary">pgmA</name>
    <name type="ORF">AFUA_3G11830</name>
</gene>
<accession>Q4WY53</accession>
<proteinExistence type="evidence at protein level"/>
<evidence type="ECO:0000250" key="1">
    <source>
        <dbReference type="UniProtKB" id="P00949"/>
    </source>
</evidence>
<evidence type="ECO:0000250" key="2">
    <source>
        <dbReference type="UniProtKB" id="P37012"/>
    </source>
</evidence>
<evidence type="ECO:0000305" key="3"/>
<evidence type="ECO:0007829" key="4">
    <source>
        <dbReference type="PDB" id="7P5O"/>
    </source>
</evidence>
<keyword id="KW-0002">3D-structure</keyword>
<keyword id="KW-0119">Carbohydrate metabolism</keyword>
<keyword id="KW-0963">Cytoplasm</keyword>
<keyword id="KW-0313">Glucose metabolism</keyword>
<keyword id="KW-0413">Isomerase</keyword>
<keyword id="KW-0460">Magnesium</keyword>
<keyword id="KW-0479">Metal-binding</keyword>
<keyword id="KW-0597">Phosphoprotein</keyword>
<keyword id="KW-1185">Reference proteome</keyword>
<reference key="1">
    <citation type="journal article" date="2005" name="Nature">
        <title>Genomic sequence of the pathogenic and allergenic filamentous fungus Aspergillus fumigatus.</title>
        <authorList>
            <person name="Nierman W.C."/>
            <person name="Pain A."/>
            <person name="Anderson M.J."/>
            <person name="Wortman J.R."/>
            <person name="Kim H.S."/>
            <person name="Arroyo J."/>
            <person name="Berriman M."/>
            <person name="Abe K."/>
            <person name="Archer D.B."/>
            <person name="Bermejo C."/>
            <person name="Bennett J.W."/>
            <person name="Bowyer P."/>
            <person name="Chen D."/>
            <person name="Collins M."/>
            <person name="Coulsen R."/>
            <person name="Davies R."/>
            <person name="Dyer P.S."/>
            <person name="Farman M.L."/>
            <person name="Fedorova N."/>
            <person name="Fedorova N.D."/>
            <person name="Feldblyum T.V."/>
            <person name="Fischer R."/>
            <person name="Fosker N."/>
            <person name="Fraser A."/>
            <person name="Garcia J.L."/>
            <person name="Garcia M.J."/>
            <person name="Goble A."/>
            <person name="Goldman G.H."/>
            <person name="Gomi K."/>
            <person name="Griffith-Jones S."/>
            <person name="Gwilliam R."/>
            <person name="Haas B.J."/>
            <person name="Haas H."/>
            <person name="Harris D.E."/>
            <person name="Horiuchi H."/>
            <person name="Huang J."/>
            <person name="Humphray S."/>
            <person name="Jimenez J."/>
            <person name="Keller N."/>
            <person name="Khouri H."/>
            <person name="Kitamoto K."/>
            <person name="Kobayashi T."/>
            <person name="Konzack S."/>
            <person name="Kulkarni R."/>
            <person name="Kumagai T."/>
            <person name="Lafton A."/>
            <person name="Latge J.-P."/>
            <person name="Li W."/>
            <person name="Lord A."/>
            <person name="Lu C."/>
            <person name="Majoros W.H."/>
            <person name="May G.S."/>
            <person name="Miller B.L."/>
            <person name="Mohamoud Y."/>
            <person name="Molina M."/>
            <person name="Monod M."/>
            <person name="Mouyna I."/>
            <person name="Mulligan S."/>
            <person name="Murphy L.D."/>
            <person name="O'Neil S."/>
            <person name="Paulsen I."/>
            <person name="Penalva M.A."/>
            <person name="Pertea M."/>
            <person name="Price C."/>
            <person name="Pritchard B.L."/>
            <person name="Quail M.A."/>
            <person name="Rabbinowitsch E."/>
            <person name="Rawlins N."/>
            <person name="Rajandream M.A."/>
            <person name="Reichard U."/>
            <person name="Renauld H."/>
            <person name="Robson G.D."/>
            <person name="Rodriguez de Cordoba S."/>
            <person name="Rodriguez-Pena J.M."/>
            <person name="Ronning C.M."/>
            <person name="Rutter S."/>
            <person name="Salzberg S.L."/>
            <person name="Sanchez M."/>
            <person name="Sanchez-Ferrero J.C."/>
            <person name="Saunders D."/>
            <person name="Seeger K."/>
            <person name="Squares R."/>
            <person name="Squares S."/>
            <person name="Takeuchi M."/>
            <person name="Tekaia F."/>
            <person name="Turner G."/>
            <person name="Vazquez de Aldana C.R."/>
            <person name="Weidman J."/>
            <person name="White O."/>
            <person name="Woodward J.R."/>
            <person name="Yu J.-H."/>
            <person name="Fraser C.M."/>
            <person name="Galagan J.E."/>
            <person name="Asai K."/>
            <person name="Machida M."/>
            <person name="Hall N."/>
            <person name="Barrell B.G."/>
            <person name="Denning D.W."/>
        </authorList>
    </citation>
    <scope>NUCLEOTIDE SEQUENCE [LARGE SCALE GENOMIC DNA]</scope>
    <source>
        <strain>ATCC MYA-4609 / CBS 101355 / FGSC A1100 / Af293</strain>
    </source>
</reference>
<dbReference type="EC" id="5.4.2.2" evidence="2"/>
<dbReference type="EMBL" id="AAHF01000002">
    <property type="protein sequence ID" value="EAL92400.1"/>
    <property type="molecule type" value="Genomic_DNA"/>
</dbReference>
<dbReference type="RefSeq" id="XP_754438.1">
    <property type="nucleotide sequence ID" value="XM_749345.1"/>
</dbReference>
<dbReference type="PDB" id="7P5O">
    <property type="method" value="X-ray"/>
    <property type="resolution" value="2.48 A"/>
    <property type="chains" value="A/B=1-555"/>
</dbReference>
<dbReference type="PDBsum" id="7P5O"/>
<dbReference type="SMR" id="Q4WY53"/>
<dbReference type="FunCoup" id="Q4WY53">
    <property type="interactions" value="642"/>
</dbReference>
<dbReference type="STRING" id="330879.Q4WY53"/>
<dbReference type="SwissPalm" id="Q4WY53"/>
<dbReference type="EnsemblFungi" id="EAL92400">
    <property type="protein sequence ID" value="EAL92400"/>
    <property type="gene ID" value="AFUA_3G11830"/>
</dbReference>
<dbReference type="GeneID" id="3511873"/>
<dbReference type="KEGG" id="afm:AFUA_3G11830"/>
<dbReference type="VEuPathDB" id="FungiDB:Afu3g11830"/>
<dbReference type="eggNOG" id="KOG0625">
    <property type="taxonomic scope" value="Eukaryota"/>
</dbReference>
<dbReference type="HOGENOM" id="CLU_009330_0_1_1"/>
<dbReference type="InParanoid" id="Q4WY53"/>
<dbReference type="OMA" id="WIQDRAN"/>
<dbReference type="OrthoDB" id="2291at2759"/>
<dbReference type="Proteomes" id="UP000002530">
    <property type="component" value="Chromosome 3"/>
</dbReference>
<dbReference type="GO" id="GO:0005829">
    <property type="term" value="C:cytosol"/>
    <property type="evidence" value="ECO:0000318"/>
    <property type="project" value="GO_Central"/>
</dbReference>
<dbReference type="GO" id="GO:0000287">
    <property type="term" value="F:magnesium ion binding"/>
    <property type="evidence" value="ECO:0007669"/>
    <property type="project" value="InterPro"/>
</dbReference>
<dbReference type="GO" id="GO:0004614">
    <property type="term" value="F:phosphoglucomutase activity"/>
    <property type="evidence" value="ECO:0000318"/>
    <property type="project" value="GO_Central"/>
</dbReference>
<dbReference type="GO" id="GO:0005975">
    <property type="term" value="P:carbohydrate metabolic process"/>
    <property type="evidence" value="ECO:0000318"/>
    <property type="project" value="GO_Central"/>
</dbReference>
<dbReference type="GO" id="GO:0006006">
    <property type="term" value="P:glucose metabolic process"/>
    <property type="evidence" value="ECO:0007669"/>
    <property type="project" value="UniProtKB-KW"/>
</dbReference>
<dbReference type="CDD" id="cd03085">
    <property type="entry name" value="PGM1"/>
    <property type="match status" value="1"/>
</dbReference>
<dbReference type="FunFam" id="3.30.310.50:FF:000002">
    <property type="entry name" value="Phosphoglucomutase 5"/>
    <property type="match status" value="1"/>
</dbReference>
<dbReference type="FunFam" id="3.40.120.10:FF:000004">
    <property type="entry name" value="Phosphoglucomutase 5"/>
    <property type="match status" value="1"/>
</dbReference>
<dbReference type="FunFam" id="3.40.120.10:FF:000005">
    <property type="entry name" value="Phosphoglucomutase 5"/>
    <property type="match status" value="1"/>
</dbReference>
<dbReference type="FunFam" id="3.40.120.10:FF:000006">
    <property type="entry name" value="Phosphoglucomutase PgmA"/>
    <property type="match status" value="1"/>
</dbReference>
<dbReference type="Gene3D" id="3.40.120.10">
    <property type="entry name" value="Alpha-D-Glucose-1,6-Bisphosphate, subunit A, domain 3"/>
    <property type="match status" value="3"/>
</dbReference>
<dbReference type="Gene3D" id="3.30.310.50">
    <property type="entry name" value="Alpha-D-phosphohexomutase, C-terminal domain"/>
    <property type="match status" value="1"/>
</dbReference>
<dbReference type="InterPro" id="IPR005844">
    <property type="entry name" value="A-D-PHexomutase_a/b/a-I"/>
</dbReference>
<dbReference type="InterPro" id="IPR016055">
    <property type="entry name" value="A-D-PHexomutase_a/b/a-I/II/III"/>
</dbReference>
<dbReference type="InterPro" id="IPR005845">
    <property type="entry name" value="A-D-PHexomutase_a/b/a-II"/>
</dbReference>
<dbReference type="InterPro" id="IPR005846">
    <property type="entry name" value="A-D-PHexomutase_a/b/a-III"/>
</dbReference>
<dbReference type="InterPro" id="IPR036900">
    <property type="entry name" value="A-D-PHexomutase_C_sf"/>
</dbReference>
<dbReference type="InterPro" id="IPR016066">
    <property type="entry name" value="A-D-PHexomutase_CS"/>
</dbReference>
<dbReference type="InterPro" id="IPR005841">
    <property type="entry name" value="Alpha-D-phosphohexomutase_SF"/>
</dbReference>
<dbReference type="InterPro" id="IPR045244">
    <property type="entry name" value="PGM"/>
</dbReference>
<dbReference type="NCBIfam" id="NF005737">
    <property type="entry name" value="PRK07564.1-1"/>
    <property type="match status" value="1"/>
</dbReference>
<dbReference type="PANTHER" id="PTHR22573:SF2">
    <property type="entry name" value="PHOSPHOGLUCOMUTASE"/>
    <property type="match status" value="1"/>
</dbReference>
<dbReference type="PANTHER" id="PTHR22573">
    <property type="entry name" value="PHOSPHOHEXOMUTASE FAMILY MEMBER"/>
    <property type="match status" value="1"/>
</dbReference>
<dbReference type="Pfam" id="PF24947">
    <property type="entry name" value="PGM1_C_vert_fung"/>
    <property type="match status" value="1"/>
</dbReference>
<dbReference type="Pfam" id="PF02878">
    <property type="entry name" value="PGM_PMM_I"/>
    <property type="match status" value="1"/>
</dbReference>
<dbReference type="Pfam" id="PF02879">
    <property type="entry name" value="PGM_PMM_II"/>
    <property type="match status" value="1"/>
</dbReference>
<dbReference type="Pfam" id="PF02880">
    <property type="entry name" value="PGM_PMM_III"/>
    <property type="match status" value="1"/>
</dbReference>
<dbReference type="PRINTS" id="PR00509">
    <property type="entry name" value="PGMPMM"/>
</dbReference>
<dbReference type="SUPFAM" id="SSF55957">
    <property type="entry name" value="Phosphoglucomutase, C-terminal domain"/>
    <property type="match status" value="1"/>
</dbReference>
<dbReference type="SUPFAM" id="SSF53738">
    <property type="entry name" value="Phosphoglucomutase, first 3 domains"/>
    <property type="match status" value="3"/>
</dbReference>
<dbReference type="PROSITE" id="PS00710">
    <property type="entry name" value="PGM_PMM"/>
    <property type="match status" value="1"/>
</dbReference>
<name>PGM_ASPFU</name>
<feature type="chain" id="PRO_0000228674" description="Phosphoglucomutase">
    <location>
        <begin position="1"/>
        <end position="555"/>
    </location>
</feature>
<feature type="active site" description="Phosphoserine intermediate" evidence="1">
    <location>
        <position position="114"/>
    </location>
</feature>
<feature type="binding site" evidence="1">
    <location>
        <position position="22"/>
    </location>
    <ligand>
        <name>alpha-D-glucose 1,6-bisphosphate</name>
        <dbReference type="ChEBI" id="CHEBI:58392"/>
    </ligand>
</feature>
<feature type="binding site" evidence="1">
    <location>
        <position position="114"/>
    </location>
    <ligand>
        <name>alpha-D-glucose 1,6-bisphosphate</name>
        <dbReference type="ChEBI" id="CHEBI:58392"/>
    </ligand>
</feature>
<feature type="binding site" description="via phosphate group" evidence="1">
    <location>
        <position position="114"/>
    </location>
    <ligand>
        <name>Mg(2+)</name>
        <dbReference type="ChEBI" id="CHEBI:18420"/>
    </ligand>
</feature>
<feature type="binding site" evidence="1">
    <location>
        <position position="279"/>
    </location>
    <ligand>
        <name>Mg(2+)</name>
        <dbReference type="ChEBI" id="CHEBI:18420"/>
    </ligand>
</feature>
<feature type="binding site" evidence="1">
    <location>
        <position position="281"/>
    </location>
    <ligand>
        <name>Mg(2+)</name>
        <dbReference type="ChEBI" id="CHEBI:18420"/>
    </ligand>
</feature>
<feature type="binding site" evidence="1">
    <location>
        <position position="283"/>
    </location>
    <ligand>
        <name>alpha-D-glucose 1,6-bisphosphate</name>
        <dbReference type="ChEBI" id="CHEBI:58392"/>
    </ligand>
</feature>
<feature type="binding site" evidence="1">
    <location>
        <position position="283"/>
    </location>
    <ligand>
        <name>Mg(2+)</name>
        <dbReference type="ChEBI" id="CHEBI:18420"/>
    </ligand>
</feature>
<feature type="binding site" evidence="1">
    <location>
        <position position="284"/>
    </location>
    <ligand>
        <name>alpha-D-glucose 1,6-bisphosphate</name>
        <dbReference type="ChEBI" id="CHEBI:58392"/>
    </ligand>
</feature>
<feature type="binding site" evidence="1">
    <location>
        <position position="347"/>
    </location>
    <ligand>
        <name>alpha-D-glucose 1,6-bisphosphate</name>
        <dbReference type="ChEBI" id="CHEBI:58392"/>
    </ligand>
</feature>
<feature type="binding site" evidence="1">
    <location>
        <position position="366"/>
    </location>
    <ligand>
        <name>alpha-D-glucose 1,6-bisphosphate</name>
        <dbReference type="ChEBI" id="CHEBI:58392"/>
    </ligand>
</feature>
<feature type="binding site" evidence="1">
    <location>
        <position position="368"/>
    </location>
    <ligand>
        <name>alpha-D-glucose 1,6-bisphosphate</name>
        <dbReference type="ChEBI" id="CHEBI:58392"/>
    </ligand>
</feature>
<feature type="binding site" evidence="1">
    <location>
        <position position="379"/>
    </location>
    <ligand>
        <name>alpha-D-glucose 1,6-bisphosphate</name>
        <dbReference type="ChEBI" id="CHEBI:58392"/>
    </ligand>
</feature>
<feature type="modified residue" description="Phosphoserine" evidence="2">
    <location>
        <position position="114"/>
    </location>
</feature>
<feature type="strand" evidence="4">
    <location>
        <begin position="3"/>
        <end position="7"/>
    </location>
</feature>
<feature type="strand" evidence="4">
    <location>
        <begin position="20"/>
        <end position="24"/>
    </location>
</feature>
<feature type="helix" evidence="4">
    <location>
        <begin position="25"/>
        <end position="29"/>
    </location>
</feature>
<feature type="helix" evidence="4">
    <location>
        <begin position="33"/>
        <end position="42"/>
    </location>
</feature>
<feature type="strand" evidence="4">
    <location>
        <begin position="53"/>
        <end position="58"/>
    </location>
</feature>
<feature type="helix" evidence="4">
    <location>
        <begin position="64"/>
        <end position="77"/>
    </location>
</feature>
<feature type="strand" evidence="4">
    <location>
        <begin position="82"/>
        <end position="86"/>
    </location>
</feature>
<feature type="helix" evidence="4">
    <location>
        <begin position="87"/>
        <end position="89"/>
    </location>
</feature>
<feature type="helix" evidence="4">
    <location>
        <begin position="93"/>
        <end position="102"/>
    </location>
</feature>
<feature type="strand" evidence="4">
    <location>
        <begin position="106"/>
        <end position="111"/>
    </location>
</feature>
<feature type="strand" evidence="4">
    <location>
        <begin position="122"/>
        <end position="129"/>
    </location>
</feature>
<feature type="helix" evidence="4">
    <location>
        <begin position="138"/>
        <end position="150"/>
    </location>
</feature>
<feature type="strand" evidence="4">
    <location>
        <begin position="153"/>
        <end position="157"/>
    </location>
</feature>
<feature type="strand" evidence="4">
    <location>
        <begin position="165"/>
        <end position="172"/>
    </location>
</feature>
<feature type="strand" evidence="4">
    <location>
        <begin position="175"/>
        <end position="180"/>
    </location>
</feature>
<feature type="helix" evidence="4">
    <location>
        <begin position="184"/>
        <end position="193"/>
    </location>
</feature>
<feature type="helix" evidence="4">
    <location>
        <begin position="196"/>
        <end position="205"/>
    </location>
</feature>
<feature type="strand" evidence="4">
    <location>
        <begin position="211"/>
        <end position="214"/>
    </location>
</feature>
<feature type="helix" evidence="4">
    <location>
        <begin position="221"/>
        <end position="228"/>
    </location>
</feature>
<feature type="turn" evidence="4">
    <location>
        <begin position="229"/>
        <end position="232"/>
    </location>
</feature>
<feature type="helix" evidence="4">
    <location>
        <begin position="236"/>
        <end position="238"/>
    </location>
</feature>
<feature type="strand" evidence="4">
    <location>
        <begin position="239"/>
        <end position="241"/>
    </location>
</feature>
<feature type="helix" evidence="4">
    <location>
        <begin position="248"/>
        <end position="250"/>
    </location>
</feature>
<feature type="turn" evidence="4">
    <location>
        <begin position="257"/>
        <end position="260"/>
    </location>
</feature>
<feature type="helix" evidence="4">
    <location>
        <begin position="261"/>
        <end position="269"/>
    </location>
</feature>
<feature type="strand" evidence="4">
    <location>
        <begin position="273"/>
        <end position="278"/>
    </location>
</feature>
<feature type="strand" evidence="4">
    <location>
        <begin position="280"/>
        <end position="282"/>
    </location>
</feature>
<feature type="strand" evidence="4">
    <location>
        <begin position="285"/>
        <end position="289"/>
    </location>
</feature>
<feature type="strand" evidence="4">
    <location>
        <begin position="292"/>
        <end position="294"/>
    </location>
</feature>
<feature type="helix" evidence="4">
    <location>
        <begin position="296"/>
        <end position="305"/>
    </location>
</feature>
<feature type="helix" evidence="4">
    <location>
        <begin position="307"/>
        <end position="309"/>
    </location>
</feature>
<feature type="helix" evidence="4">
    <location>
        <begin position="311"/>
        <end position="316"/>
    </location>
</feature>
<feature type="strand" evidence="4">
    <location>
        <begin position="321"/>
        <end position="324"/>
    </location>
</feature>
<feature type="helix" evidence="4">
    <location>
        <begin position="330"/>
        <end position="337"/>
    </location>
</feature>
<feature type="strand" evidence="4">
    <location>
        <begin position="342"/>
        <end position="345"/>
    </location>
</feature>
<feature type="helix" evidence="4">
    <location>
        <begin position="349"/>
        <end position="352"/>
    </location>
</feature>
<feature type="helix" evidence="4">
    <location>
        <begin position="353"/>
        <end position="357"/>
    </location>
</feature>
<feature type="strand" evidence="4">
    <location>
        <begin position="362"/>
        <end position="366"/>
    </location>
</feature>
<feature type="turn" evidence="4">
    <location>
        <begin position="367"/>
        <end position="369"/>
    </location>
</feature>
<feature type="strand" evidence="4">
    <location>
        <begin position="370"/>
        <end position="373"/>
    </location>
</feature>
<feature type="strand" evidence="4">
    <location>
        <begin position="376"/>
        <end position="378"/>
    </location>
</feature>
<feature type="helix" evidence="4">
    <location>
        <begin position="381"/>
        <end position="398"/>
    </location>
</feature>
<feature type="helix" evidence="4">
    <location>
        <begin position="406"/>
        <end position="417"/>
    </location>
</feature>
<feature type="strand" evidence="4">
    <location>
        <begin position="419"/>
        <end position="430"/>
    </location>
</feature>
<feature type="helix" evidence="4">
    <location>
        <begin position="432"/>
        <end position="446"/>
    </location>
</feature>
<feature type="strand" evidence="4">
    <location>
        <begin position="460"/>
        <end position="467"/>
    </location>
</feature>
<feature type="strand" evidence="4">
    <location>
        <begin position="483"/>
        <end position="487"/>
    </location>
</feature>
<feature type="strand" evidence="4">
    <location>
        <begin position="492"/>
        <end position="497"/>
    </location>
</feature>
<feature type="strand" evidence="4">
    <location>
        <begin position="502"/>
        <end position="515"/>
    </location>
</feature>
<feature type="helix" evidence="4">
    <location>
        <begin position="518"/>
        <end position="520"/>
    </location>
</feature>
<feature type="helix" evidence="4">
    <location>
        <begin position="525"/>
        <end position="528"/>
    </location>
</feature>
<feature type="helix" evidence="4">
    <location>
        <begin position="530"/>
        <end position="540"/>
    </location>
</feature>
<feature type="helix" evidence="4">
    <location>
        <begin position="542"/>
        <end position="546"/>
    </location>
</feature>
<feature type="strand" evidence="4">
    <location>
        <begin position="552"/>
        <end position="555"/>
    </location>
</feature>